<sequence length="593" mass="65222">MRSFSQLWPTLKRLLAYGSPWRKPLGIAVLMMWVAAAAEVSGPLLISYFIDNMVAKNNLPLKVVAGLAAAYVGLQLFAAGLHYAQSLLFNRAAVGVVQQLRTDVMDAALRQPLSEFDTQPVGQVISRVTNDTEVIRDLYVTVVATVLRSAALVGAMLVAMFSLDWRMALVAIMIFPVVLVVMVIYQRYSTPIVRRVRAYLADINDGFNEIINGMSVIQQFRQQARFGERMGEASRSHYMARMQTLRLDGFLLRPLLSLFSSLILCGLLMLFGFSASGTIEVGVLYAFISYLGRLNEPLIELTTQQAMLQQAVVAGERVFELMDGPRQQYGNDDRPLQSGTIEVDNVSFAYRDDNLVLKNINLSVPSRNFVALVGHTGSGKSTLASLLMGYYPLTEGEIRLDGRPLSSLSHSALRQGVAMVQQDPVVLADTFLANVTLGRDISEERVWQALETVQLAELARSMSDGIYTPLGEQGNNLSVGQKQLLALARVLVETPQILILDEATASIDSGTEQAIQHALAAVREHTTLVVIAHRLSTIVDADTILVLHRGQAVEQGTHQQLLAAQGRYWQMYQLQLAGEELAASVREEESLSA</sequence>
<dbReference type="EC" id="7.6.2.2"/>
<dbReference type="EMBL" id="L08627">
    <property type="protein sequence ID" value="AAC36870.1"/>
    <property type="status" value="ALT_INIT"/>
    <property type="molecule type" value="Unassigned_DNA"/>
</dbReference>
<dbReference type="EMBL" id="U82664">
    <property type="protein sequence ID" value="AAB40205.1"/>
    <property type="status" value="ALT_INIT"/>
    <property type="molecule type" value="Genomic_DNA"/>
</dbReference>
<dbReference type="EMBL" id="U00096">
    <property type="protein sequence ID" value="AAC73552.1"/>
    <property type="molecule type" value="Genomic_DNA"/>
</dbReference>
<dbReference type="EMBL" id="AP009048">
    <property type="protein sequence ID" value="BAE76229.1"/>
    <property type="molecule type" value="Genomic_DNA"/>
</dbReference>
<dbReference type="PIR" id="A64775">
    <property type="entry name" value="A64775"/>
</dbReference>
<dbReference type="RefSeq" id="NP_414983.1">
    <property type="nucleotide sequence ID" value="NC_000913.3"/>
</dbReference>
<dbReference type="RefSeq" id="WP_001256201.1">
    <property type="nucleotide sequence ID" value="NZ_SSZK01000009.1"/>
</dbReference>
<dbReference type="SMR" id="P0AAG5"/>
<dbReference type="BioGRID" id="4261405">
    <property type="interactions" value="186"/>
</dbReference>
<dbReference type="FunCoup" id="P0AAG5">
    <property type="interactions" value="184"/>
</dbReference>
<dbReference type="STRING" id="511145.b0449"/>
<dbReference type="TCDB" id="3.A.1.106.13">
    <property type="family name" value="the atp-binding cassette (abc) superfamily"/>
</dbReference>
<dbReference type="PaxDb" id="511145-b0449"/>
<dbReference type="EnsemblBacteria" id="AAC73552">
    <property type="protein sequence ID" value="AAC73552"/>
    <property type="gene ID" value="b0449"/>
</dbReference>
<dbReference type="GeneID" id="945088"/>
<dbReference type="KEGG" id="ecj:JW5061"/>
<dbReference type="KEGG" id="eco:b0449"/>
<dbReference type="KEGG" id="ecoc:C3026_02200"/>
<dbReference type="PATRIC" id="fig|1411691.4.peg.1827"/>
<dbReference type="EchoBASE" id="EB4117"/>
<dbReference type="eggNOG" id="COG1132">
    <property type="taxonomic scope" value="Bacteria"/>
</dbReference>
<dbReference type="HOGENOM" id="CLU_000604_84_3_6"/>
<dbReference type="InParanoid" id="P0AAG5"/>
<dbReference type="OMA" id="ERQRMTI"/>
<dbReference type="OrthoDB" id="9806127at2"/>
<dbReference type="PhylomeDB" id="P0AAG5"/>
<dbReference type="BioCyc" id="EcoCyc:MDLB-MONOMER"/>
<dbReference type="PRO" id="PR:P0AAG5"/>
<dbReference type="Proteomes" id="UP000000625">
    <property type="component" value="Chromosome"/>
</dbReference>
<dbReference type="GO" id="GO:0016020">
    <property type="term" value="C:membrane"/>
    <property type="evidence" value="ECO:0000255"/>
    <property type="project" value="EcoCyc"/>
</dbReference>
<dbReference type="GO" id="GO:0005886">
    <property type="term" value="C:plasma membrane"/>
    <property type="evidence" value="ECO:0000314"/>
    <property type="project" value="EcoCyc"/>
</dbReference>
<dbReference type="GO" id="GO:0008559">
    <property type="term" value="F:ABC-type xenobiotic transporter activity"/>
    <property type="evidence" value="ECO:0007669"/>
    <property type="project" value="UniProtKB-EC"/>
</dbReference>
<dbReference type="GO" id="GO:0005524">
    <property type="term" value="F:ATP binding"/>
    <property type="evidence" value="ECO:0000255"/>
    <property type="project" value="EcoCyc"/>
</dbReference>
<dbReference type="GO" id="GO:0016887">
    <property type="term" value="F:ATP hydrolysis activity"/>
    <property type="evidence" value="ECO:0007669"/>
    <property type="project" value="InterPro"/>
</dbReference>
<dbReference type="GO" id="GO:0034040">
    <property type="term" value="F:ATPase-coupled lipid transmembrane transporter activity"/>
    <property type="evidence" value="ECO:0000318"/>
    <property type="project" value="GO_Central"/>
</dbReference>
<dbReference type="GO" id="GO:0055085">
    <property type="term" value="P:transmembrane transport"/>
    <property type="evidence" value="ECO:0000318"/>
    <property type="project" value="GO_Central"/>
</dbReference>
<dbReference type="GO" id="GO:0046618">
    <property type="term" value="P:xenobiotic export from cell"/>
    <property type="evidence" value="ECO:0000305"/>
    <property type="project" value="EcoCyc"/>
</dbReference>
<dbReference type="CDD" id="cd18544">
    <property type="entry name" value="ABC_6TM_TmrA_like"/>
    <property type="match status" value="1"/>
</dbReference>
<dbReference type="FunFam" id="1.20.1560.10:FF:000023">
    <property type="entry name" value="Multidrug ABC transporter ATP-binding protein"/>
    <property type="match status" value="1"/>
</dbReference>
<dbReference type="FunFam" id="3.40.50.300:FF:000834">
    <property type="entry name" value="Multidrug ABC transporter ATP-binding protein"/>
    <property type="match status" value="1"/>
</dbReference>
<dbReference type="Gene3D" id="1.20.1560.10">
    <property type="entry name" value="ABC transporter type 1, transmembrane domain"/>
    <property type="match status" value="1"/>
</dbReference>
<dbReference type="Gene3D" id="3.40.50.300">
    <property type="entry name" value="P-loop containing nucleotide triphosphate hydrolases"/>
    <property type="match status" value="1"/>
</dbReference>
<dbReference type="InterPro" id="IPR003593">
    <property type="entry name" value="AAA+_ATPase"/>
</dbReference>
<dbReference type="InterPro" id="IPR011527">
    <property type="entry name" value="ABC1_TM_dom"/>
</dbReference>
<dbReference type="InterPro" id="IPR036640">
    <property type="entry name" value="ABC1_TM_sf"/>
</dbReference>
<dbReference type="InterPro" id="IPR003439">
    <property type="entry name" value="ABC_transporter-like_ATP-bd"/>
</dbReference>
<dbReference type="InterPro" id="IPR017871">
    <property type="entry name" value="ABC_transporter-like_CS"/>
</dbReference>
<dbReference type="InterPro" id="IPR027417">
    <property type="entry name" value="P-loop_NTPase"/>
</dbReference>
<dbReference type="InterPro" id="IPR039421">
    <property type="entry name" value="Type_1_exporter"/>
</dbReference>
<dbReference type="NCBIfam" id="NF008056">
    <property type="entry name" value="PRK10790.1"/>
    <property type="match status" value="1"/>
</dbReference>
<dbReference type="PANTHER" id="PTHR43394:SF1">
    <property type="entry name" value="ATP-BINDING CASSETTE SUB-FAMILY B MEMBER 10, MITOCHONDRIAL"/>
    <property type="match status" value="1"/>
</dbReference>
<dbReference type="PANTHER" id="PTHR43394">
    <property type="entry name" value="ATP-DEPENDENT PERMEASE MDL1, MITOCHONDRIAL"/>
    <property type="match status" value="1"/>
</dbReference>
<dbReference type="Pfam" id="PF00664">
    <property type="entry name" value="ABC_membrane"/>
    <property type="match status" value="1"/>
</dbReference>
<dbReference type="Pfam" id="PF00005">
    <property type="entry name" value="ABC_tran"/>
    <property type="match status" value="1"/>
</dbReference>
<dbReference type="SMART" id="SM00382">
    <property type="entry name" value="AAA"/>
    <property type="match status" value="1"/>
</dbReference>
<dbReference type="SUPFAM" id="SSF90123">
    <property type="entry name" value="ABC transporter transmembrane region"/>
    <property type="match status" value="1"/>
</dbReference>
<dbReference type="SUPFAM" id="SSF52540">
    <property type="entry name" value="P-loop containing nucleoside triphosphate hydrolases"/>
    <property type="match status" value="1"/>
</dbReference>
<dbReference type="PROSITE" id="PS50929">
    <property type="entry name" value="ABC_TM1F"/>
    <property type="match status" value="1"/>
</dbReference>
<dbReference type="PROSITE" id="PS00211">
    <property type="entry name" value="ABC_TRANSPORTER_1"/>
    <property type="match status" value="1"/>
</dbReference>
<dbReference type="PROSITE" id="PS50893">
    <property type="entry name" value="ABC_TRANSPORTER_2"/>
    <property type="match status" value="1"/>
</dbReference>
<reference key="1">
    <citation type="journal article" date="1993" name="Gene">
        <title>Cloning and organization of the abc and mdl genes of Escherichia coli: relationship to eukaryotic multidrug resistance.</title>
        <authorList>
            <person name="Allikmets R."/>
            <person name="Gerrard B.C."/>
            <person name="Court D."/>
            <person name="Dean M.C."/>
        </authorList>
    </citation>
    <scope>NUCLEOTIDE SEQUENCE [GENOMIC DNA]</scope>
    <source>
        <strain>TAP90 / ATCC 47037</strain>
    </source>
</reference>
<reference key="2">
    <citation type="submission" date="1997-01" db="EMBL/GenBank/DDBJ databases">
        <title>Sequence of minutes 4-25 of Escherichia coli.</title>
        <authorList>
            <person name="Chung E."/>
            <person name="Allen E."/>
            <person name="Araujo R."/>
            <person name="Aparicio A.M."/>
            <person name="Davis K."/>
            <person name="Duncan M."/>
            <person name="Federspiel N."/>
            <person name="Hyman R."/>
            <person name="Kalman S."/>
            <person name="Komp C."/>
            <person name="Kurdi O."/>
            <person name="Lew H."/>
            <person name="Lin D."/>
            <person name="Namath A."/>
            <person name="Oefner P."/>
            <person name="Roberts D."/>
            <person name="Schramm S."/>
            <person name="Davis R.W."/>
        </authorList>
    </citation>
    <scope>NUCLEOTIDE SEQUENCE [LARGE SCALE GENOMIC DNA]</scope>
    <source>
        <strain>K12 / MG1655 / ATCC 47076</strain>
    </source>
</reference>
<reference key="3">
    <citation type="journal article" date="1997" name="Science">
        <title>The complete genome sequence of Escherichia coli K-12.</title>
        <authorList>
            <person name="Blattner F.R."/>
            <person name="Plunkett G. III"/>
            <person name="Bloch C.A."/>
            <person name="Perna N.T."/>
            <person name="Burland V."/>
            <person name="Riley M."/>
            <person name="Collado-Vides J."/>
            <person name="Glasner J.D."/>
            <person name="Rode C.K."/>
            <person name="Mayhew G.F."/>
            <person name="Gregor J."/>
            <person name="Davis N.W."/>
            <person name="Kirkpatrick H.A."/>
            <person name="Goeden M.A."/>
            <person name="Rose D.J."/>
            <person name="Mau B."/>
            <person name="Shao Y."/>
        </authorList>
    </citation>
    <scope>NUCLEOTIDE SEQUENCE [LARGE SCALE GENOMIC DNA]</scope>
    <source>
        <strain>K12 / MG1655 / ATCC 47076</strain>
    </source>
</reference>
<reference key="4">
    <citation type="journal article" date="2006" name="Mol. Syst. Biol.">
        <title>Highly accurate genome sequences of Escherichia coli K-12 strains MG1655 and W3110.</title>
        <authorList>
            <person name="Hayashi K."/>
            <person name="Morooka N."/>
            <person name="Yamamoto Y."/>
            <person name="Fujita K."/>
            <person name="Isono K."/>
            <person name="Choi S."/>
            <person name="Ohtsubo E."/>
            <person name="Baba T."/>
            <person name="Wanner B.L."/>
            <person name="Mori H."/>
            <person name="Horiuchi T."/>
        </authorList>
    </citation>
    <scope>NUCLEOTIDE SEQUENCE [LARGE SCALE GENOMIC DNA]</scope>
    <source>
        <strain>K12 / W3110 / ATCC 27325 / DSM 5911</strain>
    </source>
</reference>
<reference key="5">
    <citation type="journal article" date="2005" name="Science">
        <title>Global topology analysis of the Escherichia coli inner membrane proteome.</title>
        <authorList>
            <person name="Daley D.O."/>
            <person name="Rapp M."/>
            <person name="Granseth E."/>
            <person name="Melen K."/>
            <person name="Drew D."/>
            <person name="von Heijne G."/>
        </authorList>
    </citation>
    <scope>TOPOLOGY [LARGE SCALE ANALYSIS]</scope>
    <source>
        <strain>K12 / MG1655 / ATCC 47076</strain>
    </source>
</reference>
<protein>
    <recommendedName>
        <fullName>Multidrug resistance-like ATP-binding protein MdlB</fullName>
        <ecNumber>7.6.2.2</ecNumber>
    </recommendedName>
</protein>
<keyword id="KW-0067">ATP-binding</keyword>
<keyword id="KW-0997">Cell inner membrane</keyword>
<keyword id="KW-1003">Cell membrane</keyword>
<keyword id="KW-0472">Membrane</keyword>
<keyword id="KW-0547">Nucleotide-binding</keyword>
<keyword id="KW-1185">Reference proteome</keyword>
<keyword id="KW-1278">Translocase</keyword>
<keyword id="KW-0812">Transmembrane</keyword>
<keyword id="KW-1133">Transmembrane helix</keyword>
<keyword id="KW-0813">Transport</keyword>
<organism>
    <name type="scientific">Escherichia coli (strain K12)</name>
    <dbReference type="NCBI Taxonomy" id="83333"/>
    <lineage>
        <taxon>Bacteria</taxon>
        <taxon>Pseudomonadati</taxon>
        <taxon>Pseudomonadota</taxon>
        <taxon>Gammaproteobacteria</taxon>
        <taxon>Enterobacterales</taxon>
        <taxon>Enterobacteriaceae</taxon>
        <taxon>Escherichia</taxon>
    </lineage>
</organism>
<proteinExistence type="evidence at protein level"/>
<comment type="catalytic activity">
    <reaction>
        <text>ATP + H2O + xenobioticSide 1 = ADP + phosphate + xenobioticSide 2.</text>
        <dbReference type="EC" id="7.6.2.2"/>
    </reaction>
</comment>
<comment type="subcellular location">
    <subcellularLocation>
        <location>Cell inner membrane</location>
        <topology>Multi-pass membrane protein</topology>
    </subcellularLocation>
</comment>
<comment type="similarity">
    <text evidence="4">Belongs to the ABC transporter superfamily. Drug exporter-2 (TC 3.A.1.117) family.</text>
</comment>
<comment type="caution">
    <text evidence="5">Was originally proposed to be fused with MdlA.</text>
</comment>
<comment type="sequence caution" evidence="4">
    <conflict type="erroneous initiation">
        <sequence resource="EMBL-CDS" id="AAB40205"/>
    </conflict>
</comment>
<comment type="sequence caution" evidence="4">
    <conflict type="erroneous initiation">
        <sequence resource="EMBL-CDS" id="AAC36870"/>
    </conflict>
</comment>
<evidence type="ECO:0000255" key="1"/>
<evidence type="ECO:0000255" key="2">
    <source>
        <dbReference type="PROSITE-ProRule" id="PRU00434"/>
    </source>
</evidence>
<evidence type="ECO:0000255" key="3">
    <source>
        <dbReference type="PROSITE-ProRule" id="PRU00441"/>
    </source>
</evidence>
<evidence type="ECO:0000305" key="4"/>
<evidence type="ECO:0000305" key="5">
    <source>
    </source>
</evidence>
<accession>P0AAG5</accession>
<accession>P30751</accession>
<accession>P75706</accession>
<accession>P77117</accession>
<accession>Q2MBX7</accession>
<feature type="chain" id="PRO_0000092496" description="Multidrug resistance-like ATP-binding protein MdlB">
    <location>
        <begin position="1"/>
        <end position="593"/>
    </location>
</feature>
<feature type="topological domain" description="Cytoplasmic" evidence="1">
    <location>
        <begin position="1"/>
        <end position="25"/>
    </location>
</feature>
<feature type="transmembrane region" description="Helical" evidence="3">
    <location>
        <begin position="26"/>
        <end position="46"/>
    </location>
</feature>
<feature type="topological domain" description="Periplasmic" evidence="1">
    <location>
        <begin position="47"/>
        <end position="62"/>
    </location>
</feature>
<feature type="transmembrane region" description="Helical" evidence="3">
    <location>
        <begin position="63"/>
        <end position="83"/>
    </location>
</feature>
<feature type="topological domain" description="Cytoplasmic" evidence="1">
    <location>
        <begin position="84"/>
        <end position="140"/>
    </location>
</feature>
<feature type="transmembrane region" description="Helical" evidence="3">
    <location>
        <begin position="141"/>
        <end position="161"/>
    </location>
</feature>
<feature type="topological domain" description="Periplasmic" evidence="1">
    <location>
        <begin position="162"/>
        <end position="164"/>
    </location>
</feature>
<feature type="transmembrane region" description="Helical" evidence="3">
    <location>
        <begin position="165"/>
        <end position="185"/>
    </location>
</feature>
<feature type="topological domain" description="Cytoplasmic" evidence="1">
    <location>
        <begin position="186"/>
        <end position="254"/>
    </location>
</feature>
<feature type="transmembrane region" description="Helical" evidence="3">
    <location>
        <begin position="255"/>
        <end position="275"/>
    </location>
</feature>
<feature type="topological domain" description="Periplasmic" evidence="1">
    <location>
        <begin position="276"/>
        <end position="278"/>
    </location>
</feature>
<feature type="transmembrane region" description="Helical" evidence="3">
    <location>
        <begin position="279"/>
        <end position="299"/>
    </location>
</feature>
<feature type="topological domain" description="Cytoplasmic" evidence="1">
    <location>
        <begin position="300"/>
        <end position="593"/>
    </location>
</feature>
<feature type="domain" description="ABC transmembrane type-1" evidence="3">
    <location>
        <begin position="25"/>
        <end position="310"/>
    </location>
</feature>
<feature type="domain" description="ABC transporter" evidence="2">
    <location>
        <begin position="341"/>
        <end position="574"/>
    </location>
</feature>
<feature type="binding site" evidence="2">
    <location>
        <begin position="374"/>
        <end position="381"/>
    </location>
    <ligand>
        <name>ATP</name>
        <dbReference type="ChEBI" id="CHEBI:30616"/>
    </ligand>
</feature>
<feature type="sequence conflict" description="In Ref. 1; AAC36870." evidence="4" ref="1">
    <original>NE</original>
    <variation>KQ</variation>
    <location>
        <begin position="208"/>
        <end position="209"/>
    </location>
</feature>
<feature type="sequence conflict" description="In Ref. 1; AAC36870." evidence="4" ref="1">
    <original>LQ</original>
    <variation>FT</variation>
    <location>
        <begin position="336"/>
        <end position="337"/>
    </location>
</feature>
<feature type="sequence conflict" description="In Ref. 1; AAC36870." evidence="4" ref="1">
    <original>K</original>
    <variation>N</variation>
    <location>
        <position position="358"/>
    </location>
</feature>
<feature type="sequence conflict" description="In Ref. 1; AAC36870." evidence="4" ref="1">
    <original>SALR</original>
    <variation>TRG</variation>
    <location>
        <begin position="411"/>
        <end position="414"/>
    </location>
</feature>
<feature type="sequence conflict" description="In Ref. 1; AAC36870." evidence="4" ref="1">
    <original>EL</original>
    <variation>DV</variation>
    <location>
        <begin position="457"/>
        <end position="458"/>
    </location>
</feature>
<feature type="sequence conflict" description="In Ref. 1; AAC36870." evidence="4" ref="1">
    <original>D</original>
    <variation>A</variation>
    <location>
        <position position="542"/>
    </location>
</feature>
<feature type="sequence conflict" description="In Ref. 1; AAC36870." evidence="4" ref="1">
    <original>AAQGRYWQMYQLQLAGEELAASVREEESLSA</original>
    <variation>RPRDVLADVSTATCGRRAGSQRA</variation>
    <location>
        <begin position="563"/>
        <end position="593"/>
    </location>
</feature>
<gene>
    <name type="primary">mdlB</name>
    <name type="synonym">mdl</name>
    <name type="ordered locus">b0449</name>
    <name type="ordered locus">JW5061</name>
</gene>
<name>MDLB_ECOLI</name>